<name>RSMC_SHEON</name>
<accession>Q8EIL1</accession>
<keyword id="KW-0963">Cytoplasm</keyword>
<keyword id="KW-0489">Methyltransferase</keyword>
<keyword id="KW-1185">Reference proteome</keyword>
<keyword id="KW-0698">rRNA processing</keyword>
<keyword id="KW-0949">S-adenosyl-L-methionine</keyword>
<keyword id="KW-0808">Transferase</keyword>
<organism>
    <name type="scientific">Shewanella oneidensis (strain ATCC 700550 / JCM 31522 / CIP 106686 / LMG 19005 / NCIMB 14063 / MR-1)</name>
    <dbReference type="NCBI Taxonomy" id="211586"/>
    <lineage>
        <taxon>Bacteria</taxon>
        <taxon>Pseudomonadati</taxon>
        <taxon>Pseudomonadota</taxon>
        <taxon>Gammaproteobacteria</taxon>
        <taxon>Alteromonadales</taxon>
        <taxon>Shewanellaceae</taxon>
        <taxon>Shewanella</taxon>
    </lineage>
</organism>
<comment type="function">
    <text evidence="1">Specifically methylates the guanine in position 1207 of 16S rRNA in the 30S particle.</text>
</comment>
<comment type="catalytic activity">
    <reaction evidence="1">
        <text>guanosine(1207) in 16S rRNA + S-adenosyl-L-methionine = N(2)-methylguanosine(1207) in 16S rRNA + S-adenosyl-L-homocysteine + H(+)</text>
        <dbReference type="Rhea" id="RHEA:42736"/>
        <dbReference type="Rhea" id="RHEA-COMP:10213"/>
        <dbReference type="Rhea" id="RHEA-COMP:10214"/>
        <dbReference type="ChEBI" id="CHEBI:15378"/>
        <dbReference type="ChEBI" id="CHEBI:57856"/>
        <dbReference type="ChEBI" id="CHEBI:59789"/>
        <dbReference type="ChEBI" id="CHEBI:74269"/>
        <dbReference type="ChEBI" id="CHEBI:74481"/>
        <dbReference type="EC" id="2.1.1.172"/>
    </reaction>
</comment>
<comment type="subunit">
    <text evidence="1">Monomer.</text>
</comment>
<comment type="subcellular location">
    <subcellularLocation>
        <location evidence="1">Cytoplasm</location>
    </subcellularLocation>
</comment>
<comment type="similarity">
    <text evidence="1">Belongs to the methyltransferase superfamily. RsmC family.</text>
</comment>
<protein>
    <recommendedName>
        <fullName evidence="1">Ribosomal RNA small subunit methyltransferase C</fullName>
        <ecNumber evidence="1">2.1.1.172</ecNumber>
    </recommendedName>
    <alternativeName>
        <fullName evidence="1">16S rRNA m2G1207 methyltransferase</fullName>
    </alternativeName>
    <alternativeName>
        <fullName evidence="1">rRNA (guanine-N(2)-)-methyltransferase RsmC</fullName>
    </alternativeName>
</protein>
<reference key="1">
    <citation type="journal article" date="2002" name="Nat. Biotechnol.">
        <title>Genome sequence of the dissimilatory metal ion-reducing bacterium Shewanella oneidensis.</title>
        <authorList>
            <person name="Heidelberg J.F."/>
            <person name="Paulsen I.T."/>
            <person name="Nelson K.E."/>
            <person name="Gaidos E.J."/>
            <person name="Nelson W.C."/>
            <person name="Read T.D."/>
            <person name="Eisen J.A."/>
            <person name="Seshadri R."/>
            <person name="Ward N.L."/>
            <person name="Methe B.A."/>
            <person name="Clayton R.A."/>
            <person name="Meyer T."/>
            <person name="Tsapin A."/>
            <person name="Scott J."/>
            <person name="Beanan M.J."/>
            <person name="Brinkac L.M."/>
            <person name="Daugherty S.C."/>
            <person name="DeBoy R.T."/>
            <person name="Dodson R.J."/>
            <person name="Durkin A.S."/>
            <person name="Haft D.H."/>
            <person name="Kolonay J.F."/>
            <person name="Madupu R."/>
            <person name="Peterson J.D."/>
            <person name="Umayam L.A."/>
            <person name="White O."/>
            <person name="Wolf A.M."/>
            <person name="Vamathevan J.J."/>
            <person name="Weidman J.F."/>
            <person name="Impraim M."/>
            <person name="Lee K."/>
            <person name="Berry K.J."/>
            <person name="Lee C."/>
            <person name="Mueller J."/>
            <person name="Khouri H.M."/>
            <person name="Gill J."/>
            <person name="Utterback T.R."/>
            <person name="McDonald L.A."/>
            <person name="Feldblyum T.V."/>
            <person name="Smith H.O."/>
            <person name="Venter J.C."/>
            <person name="Nealson K.H."/>
            <person name="Fraser C.M."/>
        </authorList>
    </citation>
    <scope>NUCLEOTIDE SEQUENCE [LARGE SCALE GENOMIC DNA]</scope>
    <source>
        <strain>ATCC 700550 / JCM 31522 / CIP 106686 / LMG 19005 / NCIMB 14063 / MR-1</strain>
    </source>
</reference>
<feature type="chain" id="PRO_0000369774" description="Ribosomal RNA small subunit methyltransferase C">
    <location>
        <begin position="1"/>
        <end position="342"/>
    </location>
</feature>
<gene>
    <name evidence="1" type="primary">rsmC</name>
    <name type="ordered locus">SO_0828</name>
</gene>
<dbReference type="EC" id="2.1.1.172" evidence="1"/>
<dbReference type="EMBL" id="AE014299">
    <property type="protein sequence ID" value="AAN53904.2"/>
    <property type="molecule type" value="Genomic_DNA"/>
</dbReference>
<dbReference type="RefSeq" id="NP_716459.2">
    <property type="nucleotide sequence ID" value="NC_004347.2"/>
</dbReference>
<dbReference type="RefSeq" id="WP_011071121.1">
    <property type="nucleotide sequence ID" value="NC_004347.2"/>
</dbReference>
<dbReference type="SMR" id="Q8EIL1"/>
<dbReference type="STRING" id="211586.SO_0828"/>
<dbReference type="PaxDb" id="211586-SO_0828"/>
<dbReference type="KEGG" id="son:SO_0828"/>
<dbReference type="PATRIC" id="fig|211586.12.peg.795"/>
<dbReference type="eggNOG" id="COG2813">
    <property type="taxonomic scope" value="Bacteria"/>
</dbReference>
<dbReference type="HOGENOM" id="CLU_049581_0_1_6"/>
<dbReference type="OrthoDB" id="9816072at2"/>
<dbReference type="PhylomeDB" id="Q8EIL1"/>
<dbReference type="BioCyc" id="SONE211586:G1GMP-773-MONOMER"/>
<dbReference type="Proteomes" id="UP000008186">
    <property type="component" value="Chromosome"/>
</dbReference>
<dbReference type="GO" id="GO:0005737">
    <property type="term" value="C:cytoplasm"/>
    <property type="evidence" value="ECO:0007669"/>
    <property type="project" value="UniProtKB-SubCell"/>
</dbReference>
<dbReference type="GO" id="GO:0052914">
    <property type="term" value="F:16S rRNA (guanine(1207)-N(2))-methyltransferase activity"/>
    <property type="evidence" value="ECO:0007669"/>
    <property type="project" value="UniProtKB-EC"/>
</dbReference>
<dbReference type="GO" id="GO:0003676">
    <property type="term" value="F:nucleic acid binding"/>
    <property type="evidence" value="ECO:0007669"/>
    <property type="project" value="InterPro"/>
</dbReference>
<dbReference type="GO" id="GO:0008990">
    <property type="term" value="F:rRNA (guanine-N2-)-methyltransferase activity"/>
    <property type="evidence" value="ECO:0000318"/>
    <property type="project" value="GO_Central"/>
</dbReference>
<dbReference type="GO" id="GO:0070475">
    <property type="term" value="P:rRNA base methylation"/>
    <property type="evidence" value="ECO:0000318"/>
    <property type="project" value="GO_Central"/>
</dbReference>
<dbReference type="CDD" id="cd02440">
    <property type="entry name" value="AdoMet_MTases"/>
    <property type="match status" value="1"/>
</dbReference>
<dbReference type="Gene3D" id="3.40.50.150">
    <property type="entry name" value="Vaccinia Virus protein VP39"/>
    <property type="match status" value="2"/>
</dbReference>
<dbReference type="HAMAP" id="MF_01862">
    <property type="entry name" value="16SrRNA_methyltr_C"/>
    <property type="match status" value="1"/>
</dbReference>
<dbReference type="InterPro" id="IPR002052">
    <property type="entry name" value="DNA_methylase_N6_adenine_CS"/>
</dbReference>
<dbReference type="InterPro" id="IPR013675">
    <property type="entry name" value="Mtase_sm_N"/>
</dbReference>
<dbReference type="InterPro" id="IPR023543">
    <property type="entry name" value="rRNA_ssu_MeTfrase_C"/>
</dbReference>
<dbReference type="InterPro" id="IPR046977">
    <property type="entry name" value="RsmC/RlmG"/>
</dbReference>
<dbReference type="InterPro" id="IPR029063">
    <property type="entry name" value="SAM-dependent_MTases_sf"/>
</dbReference>
<dbReference type="InterPro" id="IPR007848">
    <property type="entry name" value="Small_mtfrase_dom"/>
</dbReference>
<dbReference type="PANTHER" id="PTHR47816">
    <property type="entry name" value="RIBOSOMAL RNA SMALL SUBUNIT METHYLTRANSFERASE C"/>
    <property type="match status" value="1"/>
</dbReference>
<dbReference type="PANTHER" id="PTHR47816:SF4">
    <property type="entry name" value="RIBOSOMAL RNA SMALL SUBUNIT METHYLTRANSFERASE C"/>
    <property type="match status" value="1"/>
</dbReference>
<dbReference type="Pfam" id="PF05175">
    <property type="entry name" value="MTS"/>
    <property type="match status" value="1"/>
</dbReference>
<dbReference type="Pfam" id="PF08468">
    <property type="entry name" value="MTS_N"/>
    <property type="match status" value="1"/>
</dbReference>
<dbReference type="SUPFAM" id="SSF53335">
    <property type="entry name" value="S-adenosyl-L-methionine-dependent methyltransferases"/>
    <property type="match status" value="1"/>
</dbReference>
<proteinExistence type="inferred from homology"/>
<evidence type="ECO:0000255" key="1">
    <source>
        <dbReference type="HAMAP-Rule" id="MF_01862"/>
    </source>
</evidence>
<sequence>MLTNPSQVIIRNQETLSQHKVLVLNHEADLLPKALLDVASSVDALALDYHHYLHLAPQANNKLRCYFGHQLPHQNKYNTVIVYFPKAKPLAPYLFNLAAQHLVPNGQLLVVGENKGGIKSLVKLLPNYFAAGVKLDNARHSLLFGSSLIDTAPEITLSDWASQYQLSTPQGNITICNLVGVFSEKHLDQGTELLLSHLPTLSGRVLDFGCGAGVIAATLLKAQPTLSLECIDINAMALASCELTLAANGMMAKVYPSDGLAQTSGKFDGIISNPPFHDGLASTTNIAQRFVADSAKQLQSKGIWQIVANRHLPYSDTIAAEFGQLTVPAENNKYKLYYFQQS</sequence>